<accession>Q9LS58</accession>
<accession>F4J7N0</accession>
<sequence>MTLPELPKDLVEEILCFVPATSLKRLRSTCKGWNRLFKDDKRFARKHIEKAAKQFQPLTLTKNYRICPINVNLHGTTPSLEVKNEWIELGDRYNEDKDSEIYEFSSDSWRVIDDIIKPPHYMEYFRKCLSLKGNTYWLGIDRRRRPPDLRITLIKFDFGTEKFGYVPLPPPCQVHGFEASRLSAVGDEKLSLLLVGDSTSNTELWVTSKIGEANVVSWSKVLSLYPKPNVGFWHGLSFLLDEEKKVLLCCKSKGWMKEEDEDNVYIVGEDTKFILLNFGVQTIGGYSPIIVNYVPSLGQIELAGSKRKRDY</sequence>
<gene>
    <name type="ordered locus">At3g18320</name>
    <name type="ORF">MYF24.4</name>
</gene>
<feature type="chain" id="PRO_0000283428" description="F-box protein At3g18320">
    <location>
        <begin position="1"/>
        <end position="311"/>
    </location>
</feature>
<feature type="domain" description="F-box" evidence="1">
    <location>
        <begin position="1"/>
        <end position="46"/>
    </location>
</feature>
<protein>
    <recommendedName>
        <fullName>F-box protein At3g18320</fullName>
    </recommendedName>
</protein>
<name>FB158_ARATH</name>
<proteinExistence type="evidence at transcript level"/>
<keyword id="KW-1185">Reference proteome</keyword>
<dbReference type="EMBL" id="AB026658">
    <property type="protein sequence ID" value="BAB01098.1"/>
    <property type="molecule type" value="Genomic_DNA"/>
</dbReference>
<dbReference type="EMBL" id="CP002686">
    <property type="status" value="NOT_ANNOTATED_CDS"/>
    <property type="molecule type" value="Genomic_DNA"/>
</dbReference>
<dbReference type="BioGRID" id="6694">
    <property type="interactions" value="1"/>
</dbReference>
<dbReference type="PaxDb" id="3702-AT3G18320.1"/>
<dbReference type="PeptideAtlas" id="Q9LS58"/>
<dbReference type="ProteomicsDB" id="230646"/>
<dbReference type="DNASU" id="821361"/>
<dbReference type="Araport" id="AT3G18320"/>
<dbReference type="TAIR" id="AT3G18320"/>
<dbReference type="HOGENOM" id="CLU_034692_1_1_1"/>
<dbReference type="InParanoid" id="Q9LS58"/>
<dbReference type="PhylomeDB" id="Q9LS58"/>
<dbReference type="PRO" id="PR:Q9LS58"/>
<dbReference type="Proteomes" id="UP000006548">
    <property type="component" value="Chromosome 3"/>
</dbReference>
<dbReference type="ExpressionAtlas" id="Q9LS58">
    <property type="expression patterns" value="baseline and differential"/>
</dbReference>
<dbReference type="CDD" id="cd22157">
    <property type="entry name" value="F-box_AtFBW1-like"/>
    <property type="match status" value="1"/>
</dbReference>
<dbReference type="Gene3D" id="1.20.1280.50">
    <property type="match status" value="1"/>
</dbReference>
<dbReference type="InterPro" id="IPR006527">
    <property type="entry name" value="F-box-assoc_dom_typ1"/>
</dbReference>
<dbReference type="InterPro" id="IPR017451">
    <property type="entry name" value="F-box-assoc_interact_dom"/>
</dbReference>
<dbReference type="InterPro" id="IPR036047">
    <property type="entry name" value="F-box-like_dom_sf"/>
</dbReference>
<dbReference type="InterPro" id="IPR001810">
    <property type="entry name" value="F-box_dom"/>
</dbReference>
<dbReference type="InterPro" id="IPR011043">
    <property type="entry name" value="Gal_Oxase/kelch_b-propeller"/>
</dbReference>
<dbReference type="InterPro" id="IPR050796">
    <property type="entry name" value="SCF_F-box_component"/>
</dbReference>
<dbReference type="NCBIfam" id="TIGR01640">
    <property type="entry name" value="F_box_assoc_1"/>
    <property type="match status" value="1"/>
</dbReference>
<dbReference type="PANTHER" id="PTHR31672">
    <property type="entry name" value="BNACNNG10540D PROTEIN"/>
    <property type="match status" value="1"/>
</dbReference>
<dbReference type="PANTHER" id="PTHR31672:SF13">
    <property type="entry name" value="F-BOX PROTEIN CPR30-LIKE"/>
    <property type="match status" value="1"/>
</dbReference>
<dbReference type="Pfam" id="PF00646">
    <property type="entry name" value="F-box"/>
    <property type="match status" value="1"/>
</dbReference>
<dbReference type="Pfam" id="PF07734">
    <property type="entry name" value="FBA_1"/>
    <property type="match status" value="1"/>
</dbReference>
<dbReference type="SMART" id="SM00256">
    <property type="entry name" value="FBOX"/>
    <property type="match status" value="1"/>
</dbReference>
<dbReference type="SUPFAM" id="SSF81383">
    <property type="entry name" value="F-box domain"/>
    <property type="match status" value="1"/>
</dbReference>
<dbReference type="SUPFAM" id="SSF50965">
    <property type="entry name" value="Galactose oxidase, central domain"/>
    <property type="match status" value="1"/>
</dbReference>
<dbReference type="PROSITE" id="PS50181">
    <property type="entry name" value="FBOX"/>
    <property type="match status" value="1"/>
</dbReference>
<evidence type="ECO:0000255" key="1">
    <source>
        <dbReference type="PROSITE-ProRule" id="PRU00080"/>
    </source>
</evidence>
<reference key="1">
    <citation type="journal article" date="2000" name="DNA Res.">
        <title>Structural analysis of Arabidopsis thaliana chromosome 3. I. Sequence features of the regions of 4,504,864 bp covered by sixty P1 and TAC clones.</title>
        <authorList>
            <person name="Sato S."/>
            <person name="Nakamura Y."/>
            <person name="Kaneko T."/>
            <person name="Katoh T."/>
            <person name="Asamizu E."/>
            <person name="Tabata S."/>
        </authorList>
    </citation>
    <scope>NUCLEOTIDE SEQUENCE [LARGE SCALE GENOMIC DNA]</scope>
    <source>
        <strain>cv. Columbia</strain>
    </source>
</reference>
<reference key="2">
    <citation type="journal article" date="2017" name="Plant J.">
        <title>Araport11: a complete reannotation of the Arabidopsis thaliana reference genome.</title>
        <authorList>
            <person name="Cheng C.Y."/>
            <person name="Krishnakumar V."/>
            <person name="Chan A.P."/>
            <person name="Thibaud-Nissen F."/>
            <person name="Schobel S."/>
            <person name="Town C.D."/>
        </authorList>
    </citation>
    <scope>GENOME REANNOTATION</scope>
    <source>
        <strain>cv. Columbia</strain>
    </source>
</reference>
<organism>
    <name type="scientific">Arabidopsis thaliana</name>
    <name type="common">Mouse-ear cress</name>
    <dbReference type="NCBI Taxonomy" id="3702"/>
    <lineage>
        <taxon>Eukaryota</taxon>
        <taxon>Viridiplantae</taxon>
        <taxon>Streptophyta</taxon>
        <taxon>Embryophyta</taxon>
        <taxon>Tracheophyta</taxon>
        <taxon>Spermatophyta</taxon>
        <taxon>Magnoliopsida</taxon>
        <taxon>eudicotyledons</taxon>
        <taxon>Gunneridae</taxon>
        <taxon>Pentapetalae</taxon>
        <taxon>rosids</taxon>
        <taxon>malvids</taxon>
        <taxon>Brassicales</taxon>
        <taxon>Brassicaceae</taxon>
        <taxon>Camelineae</taxon>
        <taxon>Arabidopsis</taxon>
    </lineage>
</organism>